<dbReference type="EC" id="3.1.21.-"/>
<dbReference type="EMBL" id="AY261360">
    <property type="status" value="NOT_ANNOTATED_CDS"/>
    <property type="molecule type" value="Genomic_DNA"/>
</dbReference>
<dbReference type="SMR" id="P0C9C8"/>
<dbReference type="Proteomes" id="UP000000861">
    <property type="component" value="Segment"/>
</dbReference>
<dbReference type="GO" id="GO:0030430">
    <property type="term" value="C:host cell cytoplasm"/>
    <property type="evidence" value="ECO:0007669"/>
    <property type="project" value="UniProtKB-SubCell"/>
</dbReference>
<dbReference type="GO" id="GO:0042025">
    <property type="term" value="C:host cell nucleus"/>
    <property type="evidence" value="ECO:0007669"/>
    <property type="project" value="UniProtKB-SubCell"/>
</dbReference>
<dbReference type="GO" id="GO:0044423">
    <property type="term" value="C:virion component"/>
    <property type="evidence" value="ECO:0007669"/>
    <property type="project" value="UniProtKB-KW"/>
</dbReference>
<dbReference type="GO" id="GO:0003677">
    <property type="term" value="F:DNA binding"/>
    <property type="evidence" value="ECO:0007669"/>
    <property type="project" value="InterPro"/>
</dbReference>
<dbReference type="GO" id="GO:0003906">
    <property type="term" value="F:DNA-(apurinic or apyrimidinic site) endonuclease activity"/>
    <property type="evidence" value="ECO:0007669"/>
    <property type="project" value="TreeGrafter"/>
</dbReference>
<dbReference type="GO" id="GO:0004519">
    <property type="term" value="F:endonuclease activity"/>
    <property type="evidence" value="ECO:0007669"/>
    <property type="project" value="UniProtKB-KW"/>
</dbReference>
<dbReference type="GO" id="GO:0004527">
    <property type="term" value="F:exonuclease activity"/>
    <property type="evidence" value="ECO:0007669"/>
    <property type="project" value="UniProtKB-KW"/>
</dbReference>
<dbReference type="GO" id="GO:0008081">
    <property type="term" value="F:phosphoric diester hydrolase activity"/>
    <property type="evidence" value="ECO:0007669"/>
    <property type="project" value="TreeGrafter"/>
</dbReference>
<dbReference type="GO" id="GO:0008270">
    <property type="term" value="F:zinc ion binding"/>
    <property type="evidence" value="ECO:0007669"/>
    <property type="project" value="InterPro"/>
</dbReference>
<dbReference type="GO" id="GO:0006284">
    <property type="term" value="P:base-excision repair"/>
    <property type="evidence" value="ECO:0007669"/>
    <property type="project" value="TreeGrafter"/>
</dbReference>
<dbReference type="CDD" id="cd00019">
    <property type="entry name" value="AP2Ec"/>
    <property type="match status" value="1"/>
</dbReference>
<dbReference type="FunFam" id="3.20.20.150:FF:000028">
    <property type="entry name" value="Probable AP endonuclease"/>
    <property type="match status" value="1"/>
</dbReference>
<dbReference type="Gene3D" id="3.20.20.150">
    <property type="entry name" value="Divalent-metal-dependent TIM barrel enzymes"/>
    <property type="match status" value="1"/>
</dbReference>
<dbReference type="InterPro" id="IPR001719">
    <property type="entry name" value="AP_endonuc_2"/>
</dbReference>
<dbReference type="InterPro" id="IPR018246">
    <property type="entry name" value="AP_endonuc_F2_Zn_BS"/>
</dbReference>
<dbReference type="InterPro" id="IPR036237">
    <property type="entry name" value="Xyl_isomerase-like_sf"/>
</dbReference>
<dbReference type="InterPro" id="IPR013022">
    <property type="entry name" value="Xyl_isomerase-like_TIM-brl"/>
</dbReference>
<dbReference type="PANTHER" id="PTHR21445:SF0">
    <property type="entry name" value="APURINIC-APYRIMIDINIC ENDONUCLEASE"/>
    <property type="match status" value="1"/>
</dbReference>
<dbReference type="PANTHER" id="PTHR21445">
    <property type="entry name" value="ENDONUCLEASE IV ENDODEOXYRIBONUCLEASE IV"/>
    <property type="match status" value="1"/>
</dbReference>
<dbReference type="Pfam" id="PF01261">
    <property type="entry name" value="AP_endonuc_2"/>
    <property type="match status" value="1"/>
</dbReference>
<dbReference type="SMART" id="SM00518">
    <property type="entry name" value="AP2Ec"/>
    <property type="match status" value="1"/>
</dbReference>
<dbReference type="SUPFAM" id="SSF51658">
    <property type="entry name" value="Xylose isomerase-like"/>
    <property type="match status" value="1"/>
</dbReference>
<dbReference type="PROSITE" id="PS00731">
    <property type="entry name" value="AP_NUCLEASE_F2_3"/>
    <property type="match status" value="1"/>
</dbReference>
<dbReference type="PROSITE" id="PS51432">
    <property type="entry name" value="AP_NUCLEASE_F2_4"/>
    <property type="match status" value="1"/>
</dbReference>
<organismHost>
    <name type="scientific">Ornithodoros</name>
    <name type="common">relapsing fever ticks</name>
    <dbReference type="NCBI Taxonomy" id="6937"/>
</organismHost>
<organismHost>
    <name type="scientific">Phacochoerus aethiopicus</name>
    <name type="common">Warthog</name>
    <dbReference type="NCBI Taxonomy" id="85517"/>
</organismHost>
<organismHost>
    <name type="scientific">Phacochoerus africanus</name>
    <name type="common">Warthog</name>
    <dbReference type="NCBI Taxonomy" id="41426"/>
</organismHost>
<organismHost>
    <name type="scientific">Potamochoerus larvatus</name>
    <name type="common">Bushpig</name>
    <dbReference type="NCBI Taxonomy" id="273792"/>
</organismHost>
<organismHost>
    <name type="scientific">Sus scrofa</name>
    <name type="common">Pig</name>
    <dbReference type="NCBI Taxonomy" id="9823"/>
</organismHost>
<organism>
    <name type="scientific">African swine fever virus (isolate Pig/Kenya/KEN-50/1950)</name>
    <name type="common">ASFV</name>
    <dbReference type="NCBI Taxonomy" id="561445"/>
    <lineage>
        <taxon>Viruses</taxon>
        <taxon>Varidnaviria</taxon>
        <taxon>Bamfordvirae</taxon>
        <taxon>Nucleocytoviricota</taxon>
        <taxon>Pokkesviricetes</taxon>
        <taxon>Asfuvirales</taxon>
        <taxon>Asfarviridae</taxon>
        <taxon>Asfivirus</taxon>
        <taxon>African swine fever virus</taxon>
    </lineage>
</organism>
<gene>
    <name type="ordered locus">Ken-146</name>
</gene>
<proteinExistence type="inferred from homology"/>
<evidence type="ECO:0000250" key="1"/>
<evidence type="ECO:0000250" key="2">
    <source>
        <dbReference type="UniProtKB" id="P0C9C6"/>
    </source>
</evidence>
<evidence type="ECO:0000250" key="3">
    <source>
        <dbReference type="UniProtKB" id="Q65202"/>
    </source>
</evidence>
<evidence type="ECO:0000255" key="4">
    <source>
        <dbReference type="PROSITE-ProRule" id="PRU00763"/>
    </source>
</evidence>
<evidence type="ECO:0000305" key="5"/>
<sequence>MFGAFVSHRLWSDSGCTTTCIANSIANYVAFGEQIEFPFKSAQVFIAGPRKAVINIQEEDKAELSKMIAKHNLWVVAHGTYLDVPWSSRSAFVTHFIHQELLICKEVGIKGLVLHLGAVEPELIVEGLKKIKPVEEVVIYLETPHNKHHAYKYSTIEQIKELFLRIRNSRLKHIGLCIDTAHIWSSGVNISGYNDAGQWLRSLENIHSVIPPSHIMFHLNDAATECGSGIDRHASLFEGMIWKSYSHKIKHSGLYCFVEYITRHQCPAILERNLGSSMQLQTALTTEFHTLKSLLK</sequence>
<comment type="function">
    <text evidence="3 5">Endonuclease of the viral base excision repair system that catalyzes DNA cleavage reaction at the apurinic or apyrimidinic sites (AP sites) (By similarity). Cleaves phosphodiester bonds on the 5' side of AP sites (By similarity). In addition to endonuclease activity, the AP endonuclease has a proofreading 3'-5' exonuclease activity that is considerably more efficient in the elimination of a mismatch than in that of a correctly paired base (By similarity). Displays 3'-phosphatase and 3'-repair diesterase activities (By similarity). The single nucleotide gaps generated by the AP endonuclease are filled by the viral repair DNA polymerase X and the DNA ligase (Probable).</text>
</comment>
<comment type="cofactor">
    <cofactor evidence="4">
        <name>Zn(2+)</name>
        <dbReference type="ChEBI" id="CHEBI:29105"/>
    </cofactor>
    <text evidence="2">Binds 3 Zn(2+) ions.</text>
</comment>
<comment type="subcellular location">
    <subcellularLocation>
        <location evidence="3">Host nucleus</location>
    </subcellularLocation>
    <subcellularLocation>
        <location evidence="3">Host cytoplasm</location>
    </subcellularLocation>
    <subcellularLocation>
        <location evidence="3">Virion</location>
    </subcellularLocation>
    <text evidence="3">The early enzyme is localized in the nucleus and the cytoplasm, while the late protein is found only in the cytoplasm (By similarity). Found in association with viral nucleoid (By similarity).</text>
</comment>
<comment type="induction">
    <text evidence="5">Expressed in the early phase of the viral replicative cycle and accumulates at later times.</text>
</comment>
<comment type="miscellaneous">
    <text evidence="1">Consistent with its intracellular location, ASFV encodes its own replicative DNA polymerase and three base excision repair enzymes: a class II AP endonuclease, the repair polymerase Pol X, and an ATP-dependent DNA ligase.</text>
</comment>
<comment type="similarity">
    <text evidence="4">Belongs to the AP endonuclease 2 family.</text>
</comment>
<reference key="1">
    <citation type="submission" date="2003-03" db="EMBL/GenBank/DDBJ databases">
        <title>African swine fever virus genomes.</title>
        <authorList>
            <person name="Kutish G.F."/>
            <person name="Rock D.L."/>
        </authorList>
    </citation>
    <scope>NUCLEOTIDE SEQUENCE [LARGE SCALE GENOMIC DNA]</scope>
</reference>
<protein>
    <recommendedName>
        <fullName>Probable AP endonuclease</fullName>
        <shortName evidence="3">APE</shortName>
        <ecNumber>3.1.21.-</ecNumber>
    </recommendedName>
    <alternativeName>
        <fullName evidence="3">pE296R</fullName>
    </alternativeName>
</protein>
<feature type="chain" id="PRO_0000373142" description="Probable AP endonuclease">
    <location>
        <begin position="1"/>
        <end position="296"/>
    </location>
</feature>
<feature type="binding site" evidence="2">
    <location>
        <position position="78"/>
    </location>
    <ligand>
        <name>Zn(2+)</name>
        <dbReference type="ChEBI" id="CHEBI:29105"/>
        <label>1</label>
    </ligand>
</feature>
<feature type="binding site" evidence="2">
    <location>
        <position position="115"/>
    </location>
    <ligand>
        <name>Zn(2+)</name>
        <dbReference type="ChEBI" id="CHEBI:29105"/>
        <label>2</label>
    </ligand>
</feature>
<feature type="binding site" evidence="4">
    <location>
        <position position="142"/>
    </location>
    <ligand>
        <name>Zn(2+)</name>
        <dbReference type="ChEBI" id="CHEBI:29105"/>
        <label>2</label>
    </ligand>
</feature>
<feature type="binding site" evidence="4">
    <location>
        <position position="182"/>
    </location>
    <ligand>
        <name>Zn(2+)</name>
        <dbReference type="ChEBI" id="CHEBI:29105"/>
        <label>3</label>
    </ligand>
</feature>
<feature type="binding site" evidence="4">
    <location>
        <position position="218"/>
    </location>
    <ligand>
        <name>Zn(2+)</name>
        <dbReference type="ChEBI" id="CHEBI:29105"/>
        <label>2</label>
    </ligand>
</feature>
<feature type="binding site" evidence="4">
    <location>
        <position position="231"/>
    </location>
    <ligand>
        <name>Zn(2+)</name>
        <dbReference type="ChEBI" id="CHEBI:29105"/>
        <label>3</label>
    </ligand>
</feature>
<feature type="binding site" evidence="4">
    <location>
        <position position="233"/>
    </location>
    <ligand>
        <name>Zn(2+)</name>
        <dbReference type="ChEBI" id="CHEBI:29105"/>
        <label>3</label>
    </ligand>
</feature>
<feature type="binding site" evidence="2">
    <location>
        <position position="271"/>
    </location>
    <ligand>
        <name>Zn(2+)</name>
        <dbReference type="ChEBI" id="CHEBI:29105"/>
        <label>1</label>
    </ligand>
</feature>
<feature type="disulfide bond" evidence="2">
    <location>
        <begin position="16"/>
        <end position="20"/>
    </location>
</feature>
<name>APE_ASFK5</name>
<keyword id="KW-1015">Disulfide bond</keyword>
<keyword id="KW-0227">DNA damage</keyword>
<keyword id="KW-0234">DNA repair</keyword>
<keyword id="KW-0244">Early protein</keyword>
<keyword id="KW-0255">Endonuclease</keyword>
<keyword id="KW-0269">Exonuclease</keyword>
<keyword id="KW-1035">Host cytoplasm</keyword>
<keyword id="KW-1048">Host nucleus</keyword>
<keyword id="KW-0378">Hydrolase</keyword>
<keyword id="KW-0479">Metal-binding</keyword>
<keyword id="KW-0540">Nuclease</keyword>
<keyword id="KW-0946">Virion</keyword>
<keyword id="KW-0862">Zinc</keyword>
<accession>P0C9C8</accession>